<gene>
    <name type="ordered locus">USA300HOU_2687</name>
</gene>
<proteinExistence type="inferred from homology"/>
<organism>
    <name type="scientific">Staphylococcus aureus (strain USA300 / TCH1516)</name>
    <dbReference type="NCBI Taxonomy" id="451516"/>
    <lineage>
        <taxon>Bacteria</taxon>
        <taxon>Bacillati</taxon>
        <taxon>Bacillota</taxon>
        <taxon>Bacilli</taxon>
        <taxon>Bacillales</taxon>
        <taxon>Staphylococcaceae</taxon>
        <taxon>Staphylococcus</taxon>
    </lineage>
</organism>
<keyword id="KW-1003">Cell membrane</keyword>
<keyword id="KW-0472">Membrane</keyword>
<keyword id="KW-0812">Transmembrane</keyword>
<keyword id="KW-1133">Transmembrane helix</keyword>
<feature type="chain" id="PRO_1000087877" description="UPF0397 protein USA300HOU_2687">
    <location>
        <begin position="1"/>
        <end position="184"/>
    </location>
</feature>
<feature type="transmembrane region" description="Helical" evidence="1">
    <location>
        <begin position="11"/>
        <end position="31"/>
    </location>
</feature>
<feature type="transmembrane region" description="Helical" evidence="1">
    <location>
        <begin position="44"/>
        <end position="64"/>
    </location>
</feature>
<feature type="transmembrane region" description="Helical" evidence="1">
    <location>
        <begin position="77"/>
        <end position="97"/>
    </location>
</feature>
<feature type="transmembrane region" description="Helical" evidence="1">
    <location>
        <begin position="116"/>
        <end position="136"/>
    </location>
</feature>
<feature type="transmembrane region" description="Helical" evidence="1">
    <location>
        <begin position="148"/>
        <end position="168"/>
    </location>
</feature>
<name>Y2687_STAAT</name>
<evidence type="ECO:0000255" key="1">
    <source>
        <dbReference type="HAMAP-Rule" id="MF_01572"/>
    </source>
</evidence>
<reference key="1">
    <citation type="journal article" date="2007" name="BMC Microbiol.">
        <title>Subtle genetic changes enhance virulence of methicillin resistant and sensitive Staphylococcus aureus.</title>
        <authorList>
            <person name="Highlander S.K."/>
            <person name="Hulten K.G."/>
            <person name="Qin X."/>
            <person name="Jiang H."/>
            <person name="Yerrapragada S."/>
            <person name="Mason E.O. Jr."/>
            <person name="Shang Y."/>
            <person name="Williams T.M."/>
            <person name="Fortunov R.M."/>
            <person name="Liu Y."/>
            <person name="Igboeli O."/>
            <person name="Petrosino J."/>
            <person name="Tirumalai M."/>
            <person name="Uzman A."/>
            <person name="Fox G.E."/>
            <person name="Cardenas A.M."/>
            <person name="Muzny D.M."/>
            <person name="Hemphill L."/>
            <person name="Ding Y."/>
            <person name="Dugan S."/>
            <person name="Blyth P.R."/>
            <person name="Buhay C.J."/>
            <person name="Dinh H.H."/>
            <person name="Hawes A.C."/>
            <person name="Holder M."/>
            <person name="Kovar C.L."/>
            <person name="Lee S.L."/>
            <person name="Liu W."/>
            <person name="Nazareth L.V."/>
            <person name="Wang Q."/>
            <person name="Zhou J."/>
            <person name="Kaplan S.L."/>
            <person name="Weinstock G.M."/>
        </authorList>
    </citation>
    <scope>NUCLEOTIDE SEQUENCE [LARGE SCALE GENOMIC DNA]</scope>
    <source>
        <strain>USA300 / TCH1516</strain>
    </source>
</reference>
<comment type="subcellular location">
    <subcellularLocation>
        <location evidence="1">Cell membrane</location>
        <topology evidence="1">Multi-pass membrane protein</topology>
    </subcellularLocation>
</comment>
<comment type="similarity">
    <text evidence="1">Belongs to the UPF0397 family.</text>
</comment>
<dbReference type="EMBL" id="CP000730">
    <property type="protein sequence ID" value="ABX30673.1"/>
    <property type="molecule type" value="Genomic_DNA"/>
</dbReference>
<dbReference type="RefSeq" id="WP_000743717.1">
    <property type="nucleotide sequence ID" value="NC_010079.1"/>
</dbReference>
<dbReference type="KEGG" id="sax:USA300HOU_2687"/>
<dbReference type="HOGENOM" id="CLU_120023_0_0_9"/>
<dbReference type="BioCyc" id="SAUR451516-HMP:GTV5-2776-MONOMER"/>
<dbReference type="GO" id="GO:0005886">
    <property type="term" value="C:plasma membrane"/>
    <property type="evidence" value="ECO:0007669"/>
    <property type="project" value="UniProtKB-SubCell"/>
</dbReference>
<dbReference type="Gene3D" id="1.10.1760.20">
    <property type="match status" value="1"/>
</dbReference>
<dbReference type="HAMAP" id="MF_01572">
    <property type="entry name" value="UPF0397"/>
    <property type="match status" value="1"/>
</dbReference>
<dbReference type="InterPro" id="IPR009825">
    <property type="entry name" value="ECF_substrate-spec-like"/>
</dbReference>
<dbReference type="InterPro" id="IPR022914">
    <property type="entry name" value="UPF0397"/>
</dbReference>
<dbReference type="NCBIfam" id="NF010182">
    <property type="entry name" value="PRK13661.1"/>
    <property type="match status" value="1"/>
</dbReference>
<dbReference type="PANTHER" id="PTHR37815">
    <property type="entry name" value="UPF0397 PROTEIN BC_2624-RELATED"/>
    <property type="match status" value="1"/>
</dbReference>
<dbReference type="PANTHER" id="PTHR37815:SF3">
    <property type="entry name" value="UPF0397 PROTEIN SPR0429"/>
    <property type="match status" value="1"/>
</dbReference>
<dbReference type="Pfam" id="PF07155">
    <property type="entry name" value="ECF-ribofla_trS"/>
    <property type="match status" value="1"/>
</dbReference>
<accession>A8Z5I6</accession>
<protein>
    <recommendedName>
        <fullName evidence="1">UPF0397 protein USA300HOU_2687</fullName>
    </recommendedName>
</protein>
<sequence>MKKQDISVKTVVAIGIGAAVFVILGRFVVIPTGFPNTNIETSYAFLALISAIFGPFAGLMTGLVGHAIKDFTTYGSAWWSWVICSGIIGCLYGWIGLKLNLSSGRFSRKSMVYFNIGQIIANIICWALIAPTLDILIYNEPANKVYTQGVISAVLNIISVGIIGTILLKAYASSQIKKGSLRKE</sequence>